<gene>
    <name evidence="6" type="primary">mntA</name>
    <name type="synonym">ytgA</name>
    <name type="ordered locus">BSU30770</name>
</gene>
<comment type="function">
    <text evidence="8">Probably part of ATP-binding cassette (ABC) transport system MntABCD involved in manganese import (Probable). Binds manganese and delivers it to the membrane permease for translocation into the cytoplasm (Probable).</text>
</comment>
<comment type="subunit">
    <text evidence="5 8">The complex is probably composed of two ATP-binding proteins (MntB), two transmembrane proteins (MntC and MntD) and a solute-binding protein (MntA) (Probable). Interacts with FloT (PubMed:23651456).</text>
</comment>
<comment type="subcellular location">
    <subcellularLocation>
        <location evidence="5">Cell membrane</location>
        <topology evidence="2">Lipid-anchor</topology>
    </subcellularLocation>
    <subcellularLocation>
        <location evidence="5">Membrane raft</location>
        <topology>Lipid-anchor</topology>
    </subcellularLocation>
    <text evidence="5">Present in detergent-resistant membrane (DRM) fractions that may be equivalent to eukaryotic membrane rafts; these rafts include proteins involved in signaling, molecule trafficking and protein secretion.</text>
</comment>
<comment type="induction">
    <text evidence="4">Repressed by MntR in the presence of manganese.</text>
</comment>
<comment type="disruption phenotype">
    <text evidence="3">Null mutant is very sensitive to manganese.</text>
</comment>
<comment type="similarity">
    <text evidence="7">Belongs to the bacterial solute-binding protein 9 family.</text>
</comment>
<evidence type="ECO:0000250" key="1">
    <source>
        <dbReference type="UniProtKB" id="Q8Y653"/>
    </source>
</evidence>
<evidence type="ECO:0000255" key="2">
    <source>
        <dbReference type="PROSITE-ProRule" id="PRU00303"/>
    </source>
</evidence>
<evidence type="ECO:0000269" key="3">
    <source>
    </source>
</evidence>
<evidence type="ECO:0000269" key="4">
    <source>
    </source>
</evidence>
<evidence type="ECO:0000269" key="5">
    <source>
    </source>
</evidence>
<evidence type="ECO:0000303" key="6">
    <source>
    </source>
</evidence>
<evidence type="ECO:0000305" key="7"/>
<evidence type="ECO:0000305" key="8">
    <source>
    </source>
</evidence>
<keyword id="KW-1003">Cell membrane</keyword>
<keyword id="KW-0449">Lipoprotein</keyword>
<keyword id="KW-0464">Manganese</keyword>
<keyword id="KW-0472">Membrane</keyword>
<keyword id="KW-0479">Metal-binding</keyword>
<keyword id="KW-0564">Palmitate</keyword>
<keyword id="KW-1185">Reference proteome</keyword>
<keyword id="KW-0732">Signal</keyword>
<keyword id="KW-0813">Transport</keyword>
<proteinExistence type="evidence at protein level"/>
<feature type="signal peptide" evidence="2">
    <location>
        <begin position="1"/>
        <end position="18"/>
    </location>
</feature>
<feature type="chain" id="PRO_0000031880" description="Manganese-binding lipoprotein MntA">
    <location>
        <begin position="19"/>
        <end position="306"/>
    </location>
</feature>
<feature type="binding site" evidence="1">
    <location>
        <position position="66"/>
    </location>
    <ligand>
        <name>Mn(2+)</name>
        <dbReference type="ChEBI" id="CHEBI:29035"/>
    </ligand>
</feature>
<feature type="binding site" evidence="1">
    <location>
        <position position="132"/>
    </location>
    <ligand>
        <name>Mn(2+)</name>
        <dbReference type="ChEBI" id="CHEBI:29035"/>
    </ligand>
</feature>
<feature type="binding site" evidence="7">
    <location>
        <position position="198"/>
    </location>
    <ligand>
        <name>Mn(2+)</name>
        <dbReference type="ChEBI" id="CHEBI:29035"/>
    </ligand>
</feature>
<feature type="binding site" evidence="1">
    <location>
        <position position="278"/>
    </location>
    <ligand>
        <name>Mn(2+)</name>
        <dbReference type="ChEBI" id="CHEBI:29035"/>
    </ligand>
</feature>
<feature type="lipid moiety-binding region" description="N-palmitoyl cysteine" evidence="2">
    <location>
        <position position="19"/>
    </location>
</feature>
<feature type="lipid moiety-binding region" description="S-diacylglycerol cysteine" evidence="2">
    <location>
        <position position="19"/>
    </location>
</feature>
<sequence length="306" mass="33418">MRQGLMAAVLFATFALTGCGTDSAGKSADQQLQVTATTSQIADAAENIGGKHVKVTSLMGPGVDPHLYKASQGDTKKLMSADVVLYSGLHLEGKMEDVLQKIGEQKQSAAVAEAIPKNKLIPAGEGKTFDPHVWFSIPLWIYAVDEIEAQFSKAMPQHADAFRKNAKEYKEDLQYLDKWSRKEIAHIPEKSRVLVTAHDAFAYFGNEYGFKVKGLQGLSTDSDYGLRDVQELVDLLTEKQIKAVFVESSVSEKSINAVVEGAKEKGHTVTIGGQLYSDAMGEKGTKEGTYEGMFRHNINTITKALK</sequence>
<accession>O34385</accession>
<reference key="1">
    <citation type="journal article" date="1997" name="Microbiology">
        <title>Sequencing and functional annotation of the Bacillus subtilis genes in the 200 kb rrnB-dnaB region.</title>
        <authorList>
            <person name="Lapidus A."/>
            <person name="Galleron N."/>
            <person name="Sorokin A."/>
            <person name="Ehrlich S.D."/>
        </authorList>
    </citation>
    <scope>NUCLEOTIDE SEQUENCE [GENOMIC DNA]</scope>
    <source>
        <strain>168</strain>
    </source>
</reference>
<reference key="2">
    <citation type="journal article" date="1997" name="Nature">
        <title>The complete genome sequence of the Gram-positive bacterium Bacillus subtilis.</title>
        <authorList>
            <person name="Kunst F."/>
            <person name="Ogasawara N."/>
            <person name="Moszer I."/>
            <person name="Albertini A.M."/>
            <person name="Alloni G."/>
            <person name="Azevedo V."/>
            <person name="Bertero M.G."/>
            <person name="Bessieres P."/>
            <person name="Bolotin A."/>
            <person name="Borchert S."/>
            <person name="Borriss R."/>
            <person name="Boursier L."/>
            <person name="Brans A."/>
            <person name="Braun M."/>
            <person name="Brignell S.C."/>
            <person name="Bron S."/>
            <person name="Brouillet S."/>
            <person name="Bruschi C.V."/>
            <person name="Caldwell B."/>
            <person name="Capuano V."/>
            <person name="Carter N.M."/>
            <person name="Choi S.-K."/>
            <person name="Codani J.-J."/>
            <person name="Connerton I.F."/>
            <person name="Cummings N.J."/>
            <person name="Daniel R.A."/>
            <person name="Denizot F."/>
            <person name="Devine K.M."/>
            <person name="Duesterhoeft A."/>
            <person name="Ehrlich S.D."/>
            <person name="Emmerson P.T."/>
            <person name="Entian K.-D."/>
            <person name="Errington J."/>
            <person name="Fabret C."/>
            <person name="Ferrari E."/>
            <person name="Foulger D."/>
            <person name="Fritz C."/>
            <person name="Fujita M."/>
            <person name="Fujita Y."/>
            <person name="Fuma S."/>
            <person name="Galizzi A."/>
            <person name="Galleron N."/>
            <person name="Ghim S.-Y."/>
            <person name="Glaser P."/>
            <person name="Goffeau A."/>
            <person name="Golightly E.J."/>
            <person name="Grandi G."/>
            <person name="Guiseppi G."/>
            <person name="Guy B.J."/>
            <person name="Haga K."/>
            <person name="Haiech J."/>
            <person name="Harwood C.R."/>
            <person name="Henaut A."/>
            <person name="Hilbert H."/>
            <person name="Holsappel S."/>
            <person name="Hosono S."/>
            <person name="Hullo M.-F."/>
            <person name="Itaya M."/>
            <person name="Jones L.-M."/>
            <person name="Joris B."/>
            <person name="Karamata D."/>
            <person name="Kasahara Y."/>
            <person name="Klaerr-Blanchard M."/>
            <person name="Klein C."/>
            <person name="Kobayashi Y."/>
            <person name="Koetter P."/>
            <person name="Koningstein G."/>
            <person name="Krogh S."/>
            <person name="Kumano M."/>
            <person name="Kurita K."/>
            <person name="Lapidus A."/>
            <person name="Lardinois S."/>
            <person name="Lauber J."/>
            <person name="Lazarevic V."/>
            <person name="Lee S.-M."/>
            <person name="Levine A."/>
            <person name="Liu H."/>
            <person name="Masuda S."/>
            <person name="Mauel C."/>
            <person name="Medigue C."/>
            <person name="Medina N."/>
            <person name="Mellado R.P."/>
            <person name="Mizuno M."/>
            <person name="Moestl D."/>
            <person name="Nakai S."/>
            <person name="Noback M."/>
            <person name="Noone D."/>
            <person name="O'Reilly M."/>
            <person name="Ogawa K."/>
            <person name="Ogiwara A."/>
            <person name="Oudega B."/>
            <person name="Park S.-H."/>
            <person name="Parro V."/>
            <person name="Pohl T.M."/>
            <person name="Portetelle D."/>
            <person name="Porwollik S."/>
            <person name="Prescott A.M."/>
            <person name="Presecan E."/>
            <person name="Pujic P."/>
            <person name="Purnelle B."/>
            <person name="Rapoport G."/>
            <person name="Rey M."/>
            <person name="Reynolds S."/>
            <person name="Rieger M."/>
            <person name="Rivolta C."/>
            <person name="Rocha E."/>
            <person name="Roche B."/>
            <person name="Rose M."/>
            <person name="Sadaie Y."/>
            <person name="Sato T."/>
            <person name="Scanlan E."/>
            <person name="Schleich S."/>
            <person name="Schroeter R."/>
            <person name="Scoffone F."/>
            <person name="Sekiguchi J."/>
            <person name="Sekowska A."/>
            <person name="Seror S.J."/>
            <person name="Serror P."/>
            <person name="Shin B.-S."/>
            <person name="Soldo B."/>
            <person name="Sorokin A."/>
            <person name="Tacconi E."/>
            <person name="Takagi T."/>
            <person name="Takahashi H."/>
            <person name="Takemaru K."/>
            <person name="Takeuchi M."/>
            <person name="Tamakoshi A."/>
            <person name="Tanaka T."/>
            <person name="Terpstra P."/>
            <person name="Tognoni A."/>
            <person name="Tosato V."/>
            <person name="Uchiyama S."/>
            <person name="Vandenbol M."/>
            <person name="Vannier F."/>
            <person name="Vassarotti A."/>
            <person name="Viari A."/>
            <person name="Wambutt R."/>
            <person name="Wedler E."/>
            <person name="Wedler H."/>
            <person name="Weitzenegger T."/>
            <person name="Winters P."/>
            <person name="Wipat A."/>
            <person name="Yamamoto H."/>
            <person name="Yamane K."/>
            <person name="Yasumoto K."/>
            <person name="Yata K."/>
            <person name="Yoshida K."/>
            <person name="Yoshikawa H.-F."/>
            <person name="Zumstein E."/>
            <person name="Yoshikawa H."/>
            <person name="Danchin A."/>
        </authorList>
    </citation>
    <scope>NUCLEOTIDE SEQUENCE [LARGE SCALE GENOMIC DNA]</scope>
    <source>
        <strain>168</strain>
    </source>
</reference>
<reference key="3">
    <citation type="journal article" date="2000" name="Mol. Microbiol.">
        <title>Manganese homeostasis in Bacillus subtilis is regulated by MntR, a bifunctional regulator related to the diphtheria toxin repressor family of proteins.</title>
        <authorList>
            <person name="Que Q."/>
            <person name="Helmann J.D."/>
        </authorList>
    </citation>
    <scope>FUNCTION</scope>
    <scope>DISRUPTION PHENOTYPE</scope>
    <source>
        <strain>168</strain>
    </source>
</reference>
<reference key="4">
    <citation type="journal article" date="2003" name="Mol. Microbiol.">
        <title>The global transcriptional response of Bacillus subtilis to manganese involves the MntR, Fur, TnrA and sigmaB regulons.</title>
        <authorList>
            <person name="Guedon E."/>
            <person name="Moore C.M."/>
            <person name="Que Q."/>
            <person name="Wang T."/>
            <person name="Ye R.W."/>
            <person name="Helmann J.D."/>
        </authorList>
    </citation>
    <scope>INDUCTION</scope>
</reference>
<reference key="5">
    <citation type="journal article" date="2013" name="Mol. Microbiol.">
        <title>Flotillins functionally organize the bacterial membrane.</title>
        <authorList>
            <person name="Bach J.N."/>
            <person name="Bramkamp M."/>
        </authorList>
    </citation>
    <scope>INTERACTION WITH FLOT</scope>
    <scope>SUBCELLULAR LOCATION</scope>
    <source>
        <strain>168</strain>
    </source>
</reference>
<protein>
    <recommendedName>
        <fullName>Manganese-binding lipoprotein MntA</fullName>
    </recommendedName>
</protein>
<organism>
    <name type="scientific">Bacillus subtilis (strain 168)</name>
    <dbReference type="NCBI Taxonomy" id="224308"/>
    <lineage>
        <taxon>Bacteria</taxon>
        <taxon>Bacillati</taxon>
        <taxon>Bacillota</taxon>
        <taxon>Bacilli</taxon>
        <taxon>Bacillales</taxon>
        <taxon>Bacillaceae</taxon>
        <taxon>Bacillus</taxon>
    </lineage>
</organism>
<dbReference type="EMBL" id="AF008220">
    <property type="protein sequence ID" value="AAC00229.1"/>
    <property type="molecule type" value="Genomic_DNA"/>
</dbReference>
<dbReference type="EMBL" id="AL009126">
    <property type="protein sequence ID" value="CAB15055.1"/>
    <property type="molecule type" value="Genomic_DNA"/>
</dbReference>
<dbReference type="PIR" id="B69992">
    <property type="entry name" value="B69992"/>
</dbReference>
<dbReference type="RefSeq" id="NP_390955.1">
    <property type="nucleotide sequence ID" value="NC_000964.3"/>
</dbReference>
<dbReference type="RefSeq" id="WP_003229060.1">
    <property type="nucleotide sequence ID" value="NZ_OZ025638.1"/>
</dbReference>
<dbReference type="SMR" id="O34385"/>
<dbReference type="FunCoup" id="O34385">
    <property type="interactions" value="148"/>
</dbReference>
<dbReference type="STRING" id="224308.BSU30770"/>
<dbReference type="jPOST" id="O34385"/>
<dbReference type="PaxDb" id="224308-BSU30770"/>
<dbReference type="EnsemblBacteria" id="CAB15055">
    <property type="protein sequence ID" value="CAB15055"/>
    <property type="gene ID" value="BSU_30770"/>
</dbReference>
<dbReference type="GeneID" id="937219"/>
<dbReference type="KEGG" id="bsu:BSU30770"/>
<dbReference type="PATRIC" id="fig|224308.179.peg.3335"/>
<dbReference type="eggNOG" id="COG0803">
    <property type="taxonomic scope" value="Bacteria"/>
</dbReference>
<dbReference type="InParanoid" id="O34385"/>
<dbReference type="OrthoDB" id="9793396at2"/>
<dbReference type="PhylomeDB" id="O34385"/>
<dbReference type="BioCyc" id="BSUB:BSU30770-MONOMER"/>
<dbReference type="Proteomes" id="UP000001570">
    <property type="component" value="Chromosome"/>
</dbReference>
<dbReference type="GO" id="GO:0045121">
    <property type="term" value="C:membrane raft"/>
    <property type="evidence" value="ECO:0007669"/>
    <property type="project" value="UniProtKB-SubCell"/>
</dbReference>
<dbReference type="GO" id="GO:0005886">
    <property type="term" value="C:plasma membrane"/>
    <property type="evidence" value="ECO:0007669"/>
    <property type="project" value="UniProtKB-SubCell"/>
</dbReference>
<dbReference type="GO" id="GO:0046872">
    <property type="term" value="F:metal ion binding"/>
    <property type="evidence" value="ECO:0007669"/>
    <property type="project" value="UniProtKB-KW"/>
</dbReference>
<dbReference type="GO" id="GO:0007155">
    <property type="term" value="P:cell adhesion"/>
    <property type="evidence" value="ECO:0007669"/>
    <property type="project" value="InterPro"/>
</dbReference>
<dbReference type="GO" id="GO:0030001">
    <property type="term" value="P:metal ion transport"/>
    <property type="evidence" value="ECO:0007669"/>
    <property type="project" value="InterPro"/>
</dbReference>
<dbReference type="CDD" id="cd01016">
    <property type="entry name" value="TroA"/>
    <property type="match status" value="1"/>
</dbReference>
<dbReference type="Gene3D" id="3.40.50.1980">
    <property type="entry name" value="Nitrogenase molybdenum iron protein domain"/>
    <property type="match status" value="2"/>
</dbReference>
<dbReference type="InterPro" id="IPR006129">
    <property type="entry name" value="AdhesinB"/>
</dbReference>
<dbReference type="InterPro" id="IPR050492">
    <property type="entry name" value="Bact_metal-bind_prot9"/>
</dbReference>
<dbReference type="InterPro" id="IPR006128">
    <property type="entry name" value="Lipoprotein_PsaA-like"/>
</dbReference>
<dbReference type="InterPro" id="IPR006127">
    <property type="entry name" value="ZnuA-like"/>
</dbReference>
<dbReference type="PANTHER" id="PTHR42953">
    <property type="entry name" value="HIGH-AFFINITY ZINC UPTAKE SYSTEM PROTEIN ZNUA-RELATED"/>
    <property type="match status" value="1"/>
</dbReference>
<dbReference type="PANTHER" id="PTHR42953:SF1">
    <property type="entry name" value="METAL-BINDING PROTEIN HI_0362-RELATED"/>
    <property type="match status" value="1"/>
</dbReference>
<dbReference type="Pfam" id="PF01297">
    <property type="entry name" value="ZnuA"/>
    <property type="match status" value="1"/>
</dbReference>
<dbReference type="PRINTS" id="PR00691">
    <property type="entry name" value="ADHESINB"/>
</dbReference>
<dbReference type="PRINTS" id="PR00690">
    <property type="entry name" value="ADHESNFAMILY"/>
</dbReference>
<dbReference type="SUPFAM" id="SSF53807">
    <property type="entry name" value="Helical backbone' metal receptor"/>
    <property type="match status" value="1"/>
</dbReference>
<dbReference type="PROSITE" id="PS51257">
    <property type="entry name" value="PROKAR_LIPOPROTEIN"/>
    <property type="match status" value="1"/>
</dbReference>
<name>MNTA_BACSU</name>